<accession>Q8CJE2</accession>
<dbReference type="EMBL" id="AB092512">
    <property type="protein sequence ID" value="BAC16806.1"/>
    <property type="molecule type" value="mRNA"/>
</dbReference>
<dbReference type="RefSeq" id="NP_076468.2">
    <property type="nucleotide sequence ID" value="NM_023978.2"/>
</dbReference>
<dbReference type="SMR" id="Q8CJE2"/>
<dbReference type="FunCoup" id="Q8CJE2">
    <property type="interactions" value="226"/>
</dbReference>
<dbReference type="STRING" id="10116.ENSRNOP00000076026"/>
<dbReference type="GlyGen" id="Q8CJE2">
    <property type="glycosylation" value="1 site"/>
</dbReference>
<dbReference type="PhosphoSitePlus" id="Q8CJE2"/>
<dbReference type="PaxDb" id="10116-ENSRNOP00000024932"/>
<dbReference type="GeneID" id="78962"/>
<dbReference type="KEGG" id="rno:78962"/>
<dbReference type="UCSC" id="RGD:621581">
    <property type="organism name" value="rat"/>
</dbReference>
<dbReference type="AGR" id="RGD:621581"/>
<dbReference type="CTD" id="8863"/>
<dbReference type="RGD" id="621581">
    <property type="gene designation" value="Per3"/>
</dbReference>
<dbReference type="eggNOG" id="KOG3753">
    <property type="taxonomic scope" value="Eukaryota"/>
</dbReference>
<dbReference type="InParanoid" id="Q8CJE2"/>
<dbReference type="PhylomeDB" id="Q8CJE2"/>
<dbReference type="PRO" id="PR:Q8CJE2"/>
<dbReference type="Proteomes" id="UP000002494">
    <property type="component" value="Unplaced"/>
</dbReference>
<dbReference type="GO" id="GO:0005737">
    <property type="term" value="C:cytoplasm"/>
    <property type="evidence" value="ECO:0000250"/>
    <property type="project" value="UniProtKB"/>
</dbReference>
<dbReference type="GO" id="GO:0005634">
    <property type="term" value="C:nucleus"/>
    <property type="evidence" value="ECO:0000250"/>
    <property type="project" value="UniProtKB"/>
</dbReference>
<dbReference type="GO" id="GO:0019900">
    <property type="term" value="F:kinase binding"/>
    <property type="evidence" value="ECO:0000266"/>
    <property type="project" value="RGD"/>
</dbReference>
<dbReference type="GO" id="GO:0000976">
    <property type="term" value="F:transcription cis-regulatory region binding"/>
    <property type="evidence" value="ECO:0000318"/>
    <property type="project" value="GO_Central"/>
</dbReference>
<dbReference type="GO" id="GO:0001222">
    <property type="term" value="F:transcription corepressor binding"/>
    <property type="evidence" value="ECO:0000318"/>
    <property type="project" value="GO_Central"/>
</dbReference>
<dbReference type="GO" id="GO:0031625">
    <property type="term" value="F:ubiquitin protein ligase binding"/>
    <property type="evidence" value="ECO:0000266"/>
    <property type="project" value="RGD"/>
</dbReference>
<dbReference type="GO" id="GO:0032922">
    <property type="term" value="P:circadian regulation of gene expression"/>
    <property type="evidence" value="ECO:0000318"/>
    <property type="project" value="GO_Central"/>
</dbReference>
<dbReference type="GO" id="GO:0007623">
    <property type="term" value="P:circadian rhythm"/>
    <property type="evidence" value="ECO:0000266"/>
    <property type="project" value="RGD"/>
</dbReference>
<dbReference type="GO" id="GO:0043153">
    <property type="term" value="P:entrainment of circadian clock by photoperiod"/>
    <property type="evidence" value="ECO:0000318"/>
    <property type="project" value="GO_Central"/>
</dbReference>
<dbReference type="GO" id="GO:0000122">
    <property type="term" value="P:negative regulation of transcription by RNA polymerase II"/>
    <property type="evidence" value="ECO:0000250"/>
    <property type="project" value="UniProtKB"/>
</dbReference>
<dbReference type="GO" id="GO:0050821">
    <property type="term" value="P:protein stabilization"/>
    <property type="evidence" value="ECO:0000250"/>
    <property type="project" value="UniProtKB"/>
</dbReference>
<dbReference type="GO" id="GO:0045187">
    <property type="term" value="P:regulation of circadian sleep/wake cycle, sleep"/>
    <property type="evidence" value="ECO:0000250"/>
    <property type="project" value="UniProtKB"/>
</dbReference>
<dbReference type="CDD" id="cd00130">
    <property type="entry name" value="PAS"/>
    <property type="match status" value="1"/>
</dbReference>
<dbReference type="FunFam" id="3.30.450.20:FF:000013">
    <property type="entry name" value="Period circadian protein homolog 2"/>
    <property type="match status" value="1"/>
</dbReference>
<dbReference type="FunFam" id="3.30.450.20:FF:000004">
    <property type="entry name" value="Period circadian protein homolog 3"/>
    <property type="match status" value="1"/>
</dbReference>
<dbReference type="Gene3D" id="3.30.450.20">
    <property type="entry name" value="PAS domain"/>
    <property type="match status" value="2"/>
</dbReference>
<dbReference type="InterPro" id="IPR000014">
    <property type="entry name" value="PAS"/>
</dbReference>
<dbReference type="InterPro" id="IPR035965">
    <property type="entry name" value="PAS-like_dom_sf"/>
</dbReference>
<dbReference type="InterPro" id="IPR013655">
    <property type="entry name" value="PAS_fold_3"/>
</dbReference>
<dbReference type="InterPro" id="IPR048814">
    <property type="entry name" value="Per1-3_PAS-A"/>
</dbReference>
<dbReference type="InterPro" id="IPR022728">
    <property type="entry name" value="Period_circadian-like_C"/>
</dbReference>
<dbReference type="InterPro" id="IPR050760">
    <property type="entry name" value="Period_circadian_regulator"/>
</dbReference>
<dbReference type="PANTHER" id="PTHR11269">
    <property type="entry name" value="PERIOD CIRCADIAN PROTEIN"/>
    <property type="match status" value="1"/>
</dbReference>
<dbReference type="PANTHER" id="PTHR11269:SF13">
    <property type="entry name" value="PERIOD CIRCADIAN PROTEIN HOMOLOG 3"/>
    <property type="match status" value="1"/>
</dbReference>
<dbReference type="Pfam" id="PF23170">
    <property type="entry name" value="bHLH_PER"/>
    <property type="match status" value="1"/>
</dbReference>
<dbReference type="Pfam" id="PF08447">
    <property type="entry name" value="PAS_3"/>
    <property type="match status" value="1"/>
</dbReference>
<dbReference type="Pfam" id="PF21353">
    <property type="entry name" value="Per3-like_PAS-A"/>
    <property type="match status" value="1"/>
</dbReference>
<dbReference type="Pfam" id="PF12114">
    <property type="entry name" value="Period_C"/>
    <property type="match status" value="1"/>
</dbReference>
<dbReference type="SMART" id="SM00091">
    <property type="entry name" value="PAS"/>
    <property type="match status" value="2"/>
</dbReference>
<dbReference type="SUPFAM" id="SSF55785">
    <property type="entry name" value="PYP-like sensor domain (PAS domain)"/>
    <property type="match status" value="1"/>
</dbReference>
<dbReference type="PROSITE" id="PS50112">
    <property type="entry name" value="PAS"/>
    <property type="match status" value="1"/>
</dbReference>
<sequence length="1119" mass="122686">MDPCGNPAVPGGDCPQTRGPGLQGSSGQEGPLQGICVDSSHSEHEDRNRMSEELIMVVQEMKKYFPAERHTKPSTLDALNYALRCVHSVQANSEFFQSLSPRGARQAEATVYNLEELTSLASEHTSKNTDTFVAVFSFLSGRLVHISEQAAWILNSKKGFLKSLHFVDLLAPRDVRVFYAHTAPTQLPFWNTWTQRASQYECAPVKPFFCRICGGGDREQKRHYSPFRILPYLVHVHSPAQPEPEPCCLTLVEKIHSGYEAPRIPVDKRVFTTTHTPGCVFLEVDERAVPLLGFLPQDLIGTSILTYLHPEDRPLMVAVHQKVLKYVGHPPFEHSPIRFCTQNGDYVILDSSWSSFVNPWSRKVSFIIGRHKVRTSPLNEDVFATRIKKATSHDEDITELQEQIHRLLLQPVHASASSGYGSLGSSGSQEQHISVTSSSESSGHCVEEAQQEQMTLQQVYASVNKIKNVGQQLYIESMARSSVKPVMETCTEPQGSDEQKDFSSSQTLKNKSTDTGSGGDLRPEQHSSSYQQMNCIDSVIRYLTSYSFPALKRKCISCTNTSSSSEEAKPNPEADGSLRDTEQLLDIPEQETTTPSADAEGGVARTLSTAALSMASGVSQCSCSSTTDHVPPLQSESVAGACEPWALRTKAHVTAEGFKPVGLTAAVLSAHTQKEEQNYVDRFREKILTSPYGCYLQQEGRNHAKYACVVGAGATPKHSRCAGSERRKHKRKKLPTPVDSSSSSAHLCPHVRGLLPDVQHWSASVTSPCATGLALPSALVVPNQTPYLLSSFPLQDMAPHGVGDSAPWGAAAECPPLSAGPHPVSTFPSAYMGTFMTVLLHNSPLFPLWPASFSPYPFLGATGPSQMAPLVPAMAPDLEPTPSDHGPRRVEENWETHSEEEHPFISSRSSSPLQLNLLQEEMPAPSEYADALRRGACPDAKQLCVTGNSGSRSPPCATGELATASVQQESPSAAASGSSASSVHGSGSDYTSEVSENGQRSQDTHRDRAFSGAAEESIWRMIERTPQCVLMTYQVPERGRDTVLREDLEKLHSMERQRPQFSSAQKEELAKVRSWIHSHPAPEERQLQRAMSPVKTEVQLVTLQRPVNSVQQKTPVEQL</sequence>
<comment type="function">
    <text evidence="2 3">Originally described as a core component of the circadian clock. The circadian clock, an internal time-keeping system, regulates various physiological processes through the generation of approximately 24 hour circadian rhythms in gene expression, which are translated into rhythms in metabolism and behavior. It is derived from the Latin roots 'circa' (about) and 'diem' (day) and acts as an important regulator of a wide array of physiological functions including metabolism, sleep, body temperature, blood pressure, endocrine, immune, cardiovascular, and renal function. Consists of two major components: the central clock, residing in the suprachiasmatic nucleus (SCN) of the brain, and the peripheral clocks that are present in nearly every tissue and organ system. Both the central and peripheral clocks can be reset by environmental cues, also known as Zeitgebers (German for 'timegivers'). The predominant Zeitgeber for the central clock is light, which is sensed by retina and signals directly to the SCN. The central clock entrains the peripheral clocks through neuronal and hormonal signals, body temperature and feeding-related cues, aligning all clocks with the external light/dark cycle. Circadian rhythms allow an organism to achieve temporal homeostasis with its environment at the molecular level by regulating gene expression to create a peak of protein expression once every 24 hours to control when a particular physiological process is most active with respect to the solar day. Transcription and translation of core clock components (CLOCK, NPAS2, BMAL1, BMAL2, PER1, PER2, PER3, CRY1 and CRY2) plays a critical role in rhythm generation, whereas delays imposed by post-translational modifications (PTMs) are important for determining the period (tau) of the rhythms (tau refers to the period of a rhythm and is the length, in time, of one complete cycle). A diurnal rhythm is synchronized with the day/night cycle, while the ultradian and infradian rhythms have a period shorter and longer than 24 hours, respectively. Disruptions in the circadian rhythms contribute to the pathology of cardiovascular diseases, cancer, metabolic syndromes and aging. A transcription/translation feedback loop (TTFL) forms the core of the molecular circadian clock mechanism. Transcription factors, CLOCK or NPAS2 and BMAL1 or BMAL2, form the positive limb of the feedback loop, act in the form of a heterodimer and activate the transcription of core clock genes and clock-controlled genes (involved in key metabolic processes), harboring E-box elements (5'-CACGTG-3') within their promoters. The core clock genes: PER1/2/3 and CRY1/2 which are transcriptional repressors form the negative limb of the feedback loop and interact with the CLOCK|NPAS2-BMAL1|BMAL2 heterodimer inhibiting its activity and thereby negatively regulating their own expression. This heterodimer also activates nuclear receptors NR1D1, NR1D2, RORA, RORB and RORG, which form a second feedback loop and which activate and repress BMAL1 transcription, respectively. Has a redundant role with the other PER proteins PER1 and PER2 and is not essential for the circadian rhythms maintenance. In contrast, plays an important role in sleep-wake timing and sleep homeostasis probably through the transcriptional regulation of sleep homeostasis-related genes, without influencing circadian parameters. Can bind heme.</text>
</comment>
<comment type="subunit">
    <text evidence="2 3">Homodimer. Component of the circadian core oscillator, which includes the CRY proteins, CLOCK or NPAS2, BMAL1 or BMAL2, CSNK1D and/or CSNK1E, TIMELESS and the PER proteins. Interacts directly with PER1, PER2, CRY1, CRY2, and TIMELESS; interaction with CRY1 and CRY2 is weak and not rhythmic. Interacts with FBXW11 and BTRC.</text>
</comment>
<comment type="subcellular location">
    <subcellularLocation>
        <location evidence="2">Cytoplasm</location>
    </subcellularLocation>
    <subcellularLocation>
        <location evidence="2">Nucleus</location>
    </subcellularLocation>
    <text evidence="2">Mainly cytoplasmic. Translocates to the nucleus through binding PER1, PER2, CRY1 or CRY2, but not TIMELESS.</text>
</comment>
<comment type="PTM">
    <text evidence="2">Phosphorylation by CSNK1E is weak and appears to require association with PER1 and translocation to the nucleus.</text>
</comment>
<comment type="PTM">
    <text evidence="2">Ubiquitinated.</text>
</comment>
<keyword id="KW-0090">Biological rhythms</keyword>
<keyword id="KW-0963">Cytoplasm</keyword>
<keyword id="KW-0539">Nucleus</keyword>
<keyword id="KW-0597">Phosphoprotein</keyword>
<keyword id="KW-1185">Reference proteome</keyword>
<keyword id="KW-0677">Repeat</keyword>
<keyword id="KW-0804">Transcription</keyword>
<keyword id="KW-0805">Transcription regulation</keyword>
<keyword id="KW-0832">Ubl conjugation</keyword>
<name>PER3_RAT</name>
<evidence type="ECO:0000250" key="1"/>
<evidence type="ECO:0000250" key="2">
    <source>
        <dbReference type="UniProtKB" id="O70361"/>
    </source>
</evidence>
<evidence type="ECO:0000250" key="3">
    <source>
        <dbReference type="UniProtKB" id="P56645"/>
    </source>
</evidence>
<evidence type="ECO:0000255" key="4">
    <source>
        <dbReference type="PROSITE-ProRule" id="PRU00140"/>
    </source>
</evidence>
<evidence type="ECO:0000256" key="5">
    <source>
        <dbReference type="SAM" id="MobiDB-lite"/>
    </source>
</evidence>
<reference key="1">
    <citation type="submission" date="2002-09" db="EMBL/GenBank/DDBJ databases">
        <title>Cloning and circadian expression of rat period3 gene.</title>
        <authorList>
            <person name="Suzuki S."/>
            <person name="Oishi K."/>
            <person name="Sakamoto K."/>
            <person name="Ishida N."/>
        </authorList>
    </citation>
    <scope>NUCLEOTIDE SEQUENCE [MRNA]</scope>
    <source>
        <tissue>Brain</tissue>
    </source>
</reference>
<proteinExistence type="evidence at transcript level"/>
<gene>
    <name type="primary">Per3</name>
</gene>
<organism>
    <name type="scientific">Rattus norvegicus</name>
    <name type="common">Rat</name>
    <dbReference type="NCBI Taxonomy" id="10116"/>
    <lineage>
        <taxon>Eukaryota</taxon>
        <taxon>Metazoa</taxon>
        <taxon>Chordata</taxon>
        <taxon>Craniata</taxon>
        <taxon>Vertebrata</taxon>
        <taxon>Euteleostomi</taxon>
        <taxon>Mammalia</taxon>
        <taxon>Eutheria</taxon>
        <taxon>Euarchontoglires</taxon>
        <taxon>Glires</taxon>
        <taxon>Rodentia</taxon>
        <taxon>Myomorpha</taxon>
        <taxon>Muroidea</taxon>
        <taxon>Muridae</taxon>
        <taxon>Murinae</taxon>
        <taxon>Rattus</taxon>
    </lineage>
</organism>
<feature type="chain" id="PRO_0000261155" description="Period circadian protein homolog 3">
    <location>
        <begin position="1"/>
        <end position="1119"/>
    </location>
</feature>
<feature type="domain" description="PAS 1" evidence="4">
    <location>
        <begin position="120"/>
        <end position="187"/>
    </location>
</feature>
<feature type="domain" description="PAS 2" evidence="4">
    <location>
        <begin position="259"/>
        <end position="325"/>
    </location>
</feature>
<feature type="domain" description="PAC">
    <location>
        <begin position="334"/>
        <end position="377"/>
    </location>
</feature>
<feature type="region of interest" description="Disordered" evidence="5">
    <location>
        <begin position="1"/>
        <end position="48"/>
    </location>
</feature>
<feature type="region of interest" description="Disordered" evidence="5">
    <location>
        <begin position="419"/>
        <end position="449"/>
    </location>
</feature>
<feature type="region of interest" description="Disordered" evidence="5">
    <location>
        <begin position="483"/>
        <end position="530"/>
    </location>
</feature>
<feature type="region of interest" description="CSNK1E binding domain" evidence="1">
    <location>
        <begin position="551"/>
        <end position="750"/>
    </location>
</feature>
<feature type="region of interest" description="Disordered" evidence="5">
    <location>
        <begin position="718"/>
        <end position="744"/>
    </location>
</feature>
<feature type="region of interest" description="Disordered" evidence="5">
    <location>
        <begin position="878"/>
        <end position="910"/>
    </location>
</feature>
<feature type="region of interest" description="Disordered" evidence="5">
    <location>
        <begin position="947"/>
        <end position="1011"/>
    </location>
</feature>
<feature type="region of interest" description="CRY binding domain" evidence="1">
    <location>
        <begin position="1037"/>
        <end position="1119"/>
    </location>
</feature>
<feature type="short sequence motif" description="Nuclear export signal 1" evidence="1">
    <location>
        <begin position="54"/>
        <end position="63"/>
    </location>
</feature>
<feature type="short sequence motif" description="Nuclear export signal 3" evidence="1">
    <location>
        <begin position="400"/>
        <end position="409"/>
    </location>
</feature>
<feature type="short sequence motif" description="Nuclear localization signal" evidence="1">
    <location>
        <begin position="720"/>
        <end position="739"/>
    </location>
</feature>
<feature type="short sequence motif" description="Nuclear export signal 2" evidence="1">
    <location>
        <begin position="913"/>
        <end position="920"/>
    </location>
</feature>
<feature type="compositionally biased region" description="Low complexity" evidence="5">
    <location>
        <begin position="419"/>
        <end position="428"/>
    </location>
</feature>
<feature type="compositionally biased region" description="Polar residues" evidence="5">
    <location>
        <begin position="429"/>
        <end position="442"/>
    </location>
</feature>
<feature type="compositionally biased region" description="Polar residues" evidence="5">
    <location>
        <begin position="491"/>
        <end position="515"/>
    </location>
</feature>
<feature type="compositionally biased region" description="Basic and acidic residues" evidence="5">
    <location>
        <begin position="885"/>
        <end position="903"/>
    </location>
</feature>
<feature type="compositionally biased region" description="Low complexity" evidence="5">
    <location>
        <begin position="970"/>
        <end position="988"/>
    </location>
</feature>
<feature type="compositionally biased region" description="Polar residues" evidence="5">
    <location>
        <begin position="989"/>
        <end position="1001"/>
    </location>
</feature>
<feature type="modified residue" description="Phosphoserine" evidence="3">
    <location>
        <position position="907"/>
    </location>
</feature>
<protein>
    <recommendedName>
        <fullName>Period circadian protein homolog 3</fullName>
        <shortName>rPER3</shortName>
    </recommendedName>
    <alternativeName>
        <fullName>Circadian clock protein PERIOD 3</fullName>
    </alternativeName>
</protein>